<feature type="chain" id="PRO_0000336447" description="Dihydroorotate dehydrogenase A (fumarate)">
    <location>
        <begin position="1"/>
        <end position="291"/>
    </location>
</feature>
<feature type="active site" description="Nucleophile">
    <location>
        <position position="129"/>
    </location>
</feature>
<feature type="binding site" evidence="1">
    <location>
        <position position="18"/>
    </location>
    <ligand>
        <name>FMN</name>
        <dbReference type="ChEBI" id="CHEBI:58210"/>
    </ligand>
</feature>
<feature type="binding site" evidence="1">
    <location>
        <begin position="42"/>
        <end position="43"/>
    </location>
    <ligand>
        <name>FMN</name>
        <dbReference type="ChEBI" id="CHEBI:58210"/>
    </ligand>
</feature>
<feature type="binding site" evidence="1">
    <location>
        <position position="42"/>
    </location>
    <ligand>
        <name>substrate</name>
    </ligand>
</feature>
<feature type="binding site" evidence="1">
    <location>
        <begin position="66"/>
        <end position="70"/>
    </location>
    <ligand>
        <name>substrate</name>
    </ligand>
</feature>
<feature type="binding site" evidence="1">
    <location>
        <position position="126"/>
    </location>
    <ligand>
        <name>FMN</name>
        <dbReference type="ChEBI" id="CHEBI:58210"/>
    </ligand>
</feature>
<feature type="binding site" evidence="1">
    <location>
        <position position="126"/>
    </location>
    <ligand>
        <name>substrate</name>
    </ligand>
</feature>
<feature type="binding site" evidence="1">
    <location>
        <position position="164"/>
    </location>
    <ligand>
        <name>FMN</name>
        <dbReference type="ChEBI" id="CHEBI:58210"/>
    </ligand>
</feature>
<feature type="binding site" evidence="1">
    <location>
        <position position="190"/>
    </location>
    <ligand>
        <name>FMN</name>
        <dbReference type="ChEBI" id="CHEBI:58210"/>
    </ligand>
</feature>
<feature type="binding site" evidence="1">
    <location>
        <begin position="191"/>
        <end position="192"/>
    </location>
    <ligand>
        <name>substrate</name>
    </ligand>
</feature>
<feature type="binding site" evidence="1">
    <location>
        <position position="216"/>
    </location>
    <ligand>
        <name>FMN</name>
        <dbReference type="ChEBI" id="CHEBI:58210"/>
    </ligand>
</feature>
<feature type="binding site" evidence="1">
    <location>
        <begin position="242"/>
        <end position="243"/>
    </location>
    <ligand>
        <name>FMN</name>
        <dbReference type="ChEBI" id="CHEBI:58210"/>
    </ligand>
</feature>
<feature type="binding site" evidence="1">
    <location>
        <begin position="264"/>
        <end position="265"/>
    </location>
    <ligand>
        <name>FMN</name>
        <dbReference type="ChEBI" id="CHEBI:58210"/>
    </ligand>
</feature>
<proteinExistence type="inferred from homology"/>
<gene>
    <name type="primary">pyrD</name>
    <name type="ordered locus">LSEI_1451</name>
</gene>
<accession>Q038Z3</accession>
<keyword id="KW-0963">Cytoplasm</keyword>
<keyword id="KW-0285">Flavoprotein</keyword>
<keyword id="KW-0288">FMN</keyword>
<keyword id="KW-0560">Oxidoreductase</keyword>
<keyword id="KW-0665">Pyrimidine biosynthesis</keyword>
<keyword id="KW-1185">Reference proteome</keyword>
<dbReference type="EC" id="1.3.98.1"/>
<dbReference type="EMBL" id="CP000423">
    <property type="protein sequence ID" value="ABJ70229.1"/>
    <property type="molecule type" value="Genomic_DNA"/>
</dbReference>
<dbReference type="RefSeq" id="WP_003594500.1">
    <property type="nucleotide sequence ID" value="NC_008526.1"/>
</dbReference>
<dbReference type="RefSeq" id="YP_806671.1">
    <property type="nucleotide sequence ID" value="NC_008526.1"/>
</dbReference>
<dbReference type="SMR" id="Q038Z3"/>
<dbReference type="STRING" id="321967.LSEI_1451"/>
<dbReference type="PaxDb" id="321967-LSEI_1451"/>
<dbReference type="KEGG" id="lca:LSEI_1451"/>
<dbReference type="PATRIC" id="fig|321967.11.peg.1431"/>
<dbReference type="HOGENOM" id="CLU_042042_0_0_9"/>
<dbReference type="UniPathway" id="UPA00070"/>
<dbReference type="Proteomes" id="UP000001651">
    <property type="component" value="Chromosome"/>
</dbReference>
<dbReference type="GO" id="GO:0005737">
    <property type="term" value="C:cytoplasm"/>
    <property type="evidence" value="ECO:0007669"/>
    <property type="project" value="UniProtKB-SubCell"/>
</dbReference>
<dbReference type="GO" id="GO:1990663">
    <property type="term" value="F:dihydroorotate dehydrogenase (fumarate) activity"/>
    <property type="evidence" value="ECO:0007669"/>
    <property type="project" value="UniProtKB-EC"/>
</dbReference>
<dbReference type="GO" id="GO:0006207">
    <property type="term" value="P:'de novo' pyrimidine nucleobase biosynthetic process"/>
    <property type="evidence" value="ECO:0007669"/>
    <property type="project" value="InterPro"/>
</dbReference>
<dbReference type="GO" id="GO:0044205">
    <property type="term" value="P:'de novo' UMP biosynthetic process"/>
    <property type="evidence" value="ECO:0007669"/>
    <property type="project" value="UniProtKB-UniRule"/>
</dbReference>
<dbReference type="CDD" id="cd04740">
    <property type="entry name" value="DHOD_1B_like"/>
    <property type="match status" value="1"/>
</dbReference>
<dbReference type="FunFam" id="3.20.20.70:FF:000027">
    <property type="entry name" value="Dihydropyrimidine dehydrogenase [NADP(+)]"/>
    <property type="match status" value="1"/>
</dbReference>
<dbReference type="Gene3D" id="3.20.20.70">
    <property type="entry name" value="Aldolase class I"/>
    <property type="match status" value="1"/>
</dbReference>
<dbReference type="HAMAP" id="MF_00224">
    <property type="entry name" value="DHO_dh_type1"/>
    <property type="match status" value="1"/>
</dbReference>
<dbReference type="InterPro" id="IPR013785">
    <property type="entry name" value="Aldolase_TIM"/>
</dbReference>
<dbReference type="InterPro" id="IPR050074">
    <property type="entry name" value="DHO_dehydrogenase"/>
</dbReference>
<dbReference type="InterPro" id="IPR033888">
    <property type="entry name" value="DHOD_1B"/>
</dbReference>
<dbReference type="InterPro" id="IPR024920">
    <property type="entry name" value="Dihydroorotate_DH_1"/>
</dbReference>
<dbReference type="InterPro" id="IPR012135">
    <property type="entry name" value="Dihydroorotate_DH_1_2"/>
</dbReference>
<dbReference type="InterPro" id="IPR005720">
    <property type="entry name" value="Dihydroorotate_DH_cat"/>
</dbReference>
<dbReference type="InterPro" id="IPR001295">
    <property type="entry name" value="Dihydroorotate_DH_CS"/>
</dbReference>
<dbReference type="InterPro" id="IPR049622">
    <property type="entry name" value="Dihydroorotate_DH_I"/>
</dbReference>
<dbReference type="NCBIfam" id="NF005574">
    <property type="entry name" value="PRK07259.1"/>
    <property type="match status" value="1"/>
</dbReference>
<dbReference type="NCBIfam" id="TIGR01037">
    <property type="entry name" value="pyrD_sub1_fam"/>
    <property type="match status" value="1"/>
</dbReference>
<dbReference type="PANTHER" id="PTHR48109:SF1">
    <property type="entry name" value="DIHYDROOROTATE DEHYDROGENASE (FUMARATE)"/>
    <property type="match status" value="1"/>
</dbReference>
<dbReference type="PANTHER" id="PTHR48109">
    <property type="entry name" value="DIHYDROOROTATE DEHYDROGENASE (QUINONE), MITOCHONDRIAL-RELATED"/>
    <property type="match status" value="1"/>
</dbReference>
<dbReference type="Pfam" id="PF01180">
    <property type="entry name" value="DHO_dh"/>
    <property type="match status" value="1"/>
</dbReference>
<dbReference type="PIRSF" id="PIRSF000164">
    <property type="entry name" value="DHO_oxidase"/>
    <property type="match status" value="1"/>
</dbReference>
<dbReference type="SUPFAM" id="SSF51395">
    <property type="entry name" value="FMN-linked oxidoreductases"/>
    <property type="match status" value="1"/>
</dbReference>
<dbReference type="PROSITE" id="PS00912">
    <property type="entry name" value="DHODEHASE_2"/>
    <property type="match status" value="1"/>
</dbReference>
<comment type="function">
    <text evidence="1">Catalyzes the conversion of dihydroorotate to orotate with fumarate as the electron acceptor.</text>
</comment>
<comment type="catalytic activity">
    <reaction>
        <text>(S)-dihydroorotate + fumarate = orotate + succinate</text>
        <dbReference type="Rhea" id="RHEA:30059"/>
        <dbReference type="ChEBI" id="CHEBI:29806"/>
        <dbReference type="ChEBI" id="CHEBI:30031"/>
        <dbReference type="ChEBI" id="CHEBI:30839"/>
        <dbReference type="ChEBI" id="CHEBI:30864"/>
        <dbReference type="EC" id="1.3.98.1"/>
    </reaction>
</comment>
<comment type="cofactor">
    <cofactor evidence="1">
        <name>FMN</name>
        <dbReference type="ChEBI" id="CHEBI:58210"/>
    </cofactor>
    <text evidence="1">Binds 1 FMN per subunit.</text>
</comment>
<comment type="pathway">
    <text>Pyrimidine metabolism; UMP biosynthesis via de novo pathway.</text>
</comment>
<comment type="subunit">
    <text evidence="1">Homodimer.</text>
</comment>
<comment type="subcellular location">
    <subcellularLocation>
        <location evidence="1">Cytoplasm</location>
    </subcellularLocation>
</comment>
<comment type="similarity">
    <text evidence="2">Belongs to the dihydroorotate dehydrogenase family. Type 1 subfamily.</text>
</comment>
<reference key="1">
    <citation type="journal article" date="2006" name="Proc. Natl. Acad. Sci. U.S.A.">
        <title>Comparative genomics of the lactic acid bacteria.</title>
        <authorList>
            <person name="Makarova K.S."/>
            <person name="Slesarev A."/>
            <person name="Wolf Y.I."/>
            <person name="Sorokin A."/>
            <person name="Mirkin B."/>
            <person name="Koonin E.V."/>
            <person name="Pavlov A."/>
            <person name="Pavlova N."/>
            <person name="Karamychev V."/>
            <person name="Polouchine N."/>
            <person name="Shakhova V."/>
            <person name="Grigoriev I."/>
            <person name="Lou Y."/>
            <person name="Rohksar D."/>
            <person name="Lucas S."/>
            <person name="Huang K."/>
            <person name="Goodstein D.M."/>
            <person name="Hawkins T."/>
            <person name="Plengvidhya V."/>
            <person name="Welker D."/>
            <person name="Hughes J."/>
            <person name="Goh Y."/>
            <person name="Benson A."/>
            <person name="Baldwin K."/>
            <person name="Lee J.-H."/>
            <person name="Diaz-Muniz I."/>
            <person name="Dosti B."/>
            <person name="Smeianov V."/>
            <person name="Wechter W."/>
            <person name="Barabote R."/>
            <person name="Lorca G."/>
            <person name="Altermann E."/>
            <person name="Barrangou R."/>
            <person name="Ganesan B."/>
            <person name="Xie Y."/>
            <person name="Rawsthorne H."/>
            <person name="Tamir D."/>
            <person name="Parker C."/>
            <person name="Breidt F."/>
            <person name="Broadbent J.R."/>
            <person name="Hutkins R."/>
            <person name="O'Sullivan D."/>
            <person name="Steele J."/>
            <person name="Unlu G."/>
            <person name="Saier M.H. Jr."/>
            <person name="Klaenhammer T."/>
            <person name="Richardson P."/>
            <person name="Kozyavkin S."/>
            <person name="Weimer B.C."/>
            <person name="Mills D.A."/>
        </authorList>
    </citation>
    <scope>NUCLEOTIDE SEQUENCE [LARGE SCALE GENOMIC DNA]</scope>
    <source>
        <strain>ATCC 334 / BCRC 17002 / CCUG 31169 / CIP 107868 / KCTC 3260 / NRRL B-441</strain>
    </source>
</reference>
<protein>
    <recommendedName>
        <fullName>Dihydroorotate dehydrogenase A (fumarate)</fullName>
        <shortName>DHOD A</shortName>
        <shortName>DHODase A</shortName>
        <shortName>DHOdehase A</shortName>
        <ecNumber>1.3.98.1</ecNumber>
    </recommendedName>
</protein>
<organism>
    <name type="scientific">Lacticaseibacillus paracasei (strain ATCC 334 / BCRC 17002 / CCUG 31169 / CIP 107868 / KCTC 3260 / NRRL B-441)</name>
    <name type="common">Lactobacillus paracasei</name>
    <dbReference type="NCBI Taxonomy" id="321967"/>
    <lineage>
        <taxon>Bacteria</taxon>
        <taxon>Bacillati</taxon>
        <taxon>Bacillota</taxon>
        <taxon>Bacilli</taxon>
        <taxon>Lactobacillales</taxon>
        <taxon>Lactobacillaceae</taxon>
        <taxon>Lacticaseibacillus</taxon>
    </lineage>
</organism>
<name>PYRDA_LACP3</name>
<evidence type="ECO:0000250" key="1"/>
<evidence type="ECO:0000305" key="2"/>
<sequence>MAIQLPGFTMKNPLMPASGTFGFGEGYAKEYDLNLLGALVTKSTTLAPRIGNQGTIFADGPDSTLNAVGLKNPGSDVVLHEKLPWLATQYPDLPIIASIAGVDVAEYAAVAKKLSAAPNVKALEVNISCPNVKQGGMAFGTDPEVAAAVTRAVKAASSVPIFVKLTPNVTDITAIAKAVEQAGADGLSLINTFVGMRLDIATGKPLLDNVTGGVSGPALLPMALHMVYQVAHAVRVPLIGMGGISSGHDAAEMLAAGATALAVGSANYYQKRAIPKIAAELAAIQEGQTVL</sequence>